<name>CCA_STRPN</name>
<accession>Q97PP9</accession>
<feature type="chain" id="PRO_0000139056" description="CCA-adding enzyme">
    <location>
        <begin position="1"/>
        <end position="399"/>
    </location>
</feature>
<feature type="binding site" evidence="1">
    <location>
        <position position="32"/>
    </location>
    <ligand>
        <name>ATP</name>
        <dbReference type="ChEBI" id="CHEBI:30616"/>
    </ligand>
</feature>
<feature type="binding site" evidence="1">
    <location>
        <position position="32"/>
    </location>
    <ligand>
        <name>CTP</name>
        <dbReference type="ChEBI" id="CHEBI:37563"/>
    </ligand>
</feature>
<feature type="binding site" evidence="1">
    <location>
        <position position="35"/>
    </location>
    <ligand>
        <name>ATP</name>
        <dbReference type="ChEBI" id="CHEBI:30616"/>
    </ligand>
</feature>
<feature type="binding site" evidence="1">
    <location>
        <position position="35"/>
    </location>
    <ligand>
        <name>CTP</name>
        <dbReference type="ChEBI" id="CHEBI:37563"/>
    </ligand>
</feature>
<feature type="binding site" evidence="1">
    <location>
        <position position="45"/>
    </location>
    <ligand>
        <name>Mg(2+)</name>
        <dbReference type="ChEBI" id="CHEBI:18420"/>
    </ligand>
</feature>
<feature type="binding site" evidence="1">
    <location>
        <position position="47"/>
    </location>
    <ligand>
        <name>Mg(2+)</name>
        <dbReference type="ChEBI" id="CHEBI:18420"/>
    </ligand>
</feature>
<feature type="binding site" evidence="1">
    <location>
        <position position="116"/>
    </location>
    <ligand>
        <name>ATP</name>
        <dbReference type="ChEBI" id="CHEBI:30616"/>
    </ligand>
</feature>
<feature type="binding site" evidence="1">
    <location>
        <position position="116"/>
    </location>
    <ligand>
        <name>CTP</name>
        <dbReference type="ChEBI" id="CHEBI:37563"/>
    </ligand>
</feature>
<feature type="binding site" evidence="1">
    <location>
        <position position="159"/>
    </location>
    <ligand>
        <name>ATP</name>
        <dbReference type="ChEBI" id="CHEBI:30616"/>
    </ligand>
</feature>
<feature type="binding site" evidence="1">
    <location>
        <position position="159"/>
    </location>
    <ligand>
        <name>CTP</name>
        <dbReference type="ChEBI" id="CHEBI:37563"/>
    </ligand>
</feature>
<feature type="binding site" evidence="1">
    <location>
        <position position="162"/>
    </location>
    <ligand>
        <name>ATP</name>
        <dbReference type="ChEBI" id="CHEBI:30616"/>
    </ligand>
</feature>
<feature type="binding site" evidence="1">
    <location>
        <position position="162"/>
    </location>
    <ligand>
        <name>CTP</name>
        <dbReference type="ChEBI" id="CHEBI:37563"/>
    </ligand>
</feature>
<feature type="binding site" evidence="1">
    <location>
        <position position="165"/>
    </location>
    <ligand>
        <name>ATP</name>
        <dbReference type="ChEBI" id="CHEBI:30616"/>
    </ligand>
</feature>
<feature type="binding site" evidence="1">
    <location>
        <position position="165"/>
    </location>
    <ligand>
        <name>CTP</name>
        <dbReference type="ChEBI" id="CHEBI:37563"/>
    </ligand>
</feature>
<feature type="binding site" evidence="1">
    <location>
        <position position="168"/>
    </location>
    <ligand>
        <name>ATP</name>
        <dbReference type="ChEBI" id="CHEBI:30616"/>
    </ligand>
</feature>
<feature type="binding site" evidence="1">
    <location>
        <position position="168"/>
    </location>
    <ligand>
        <name>CTP</name>
        <dbReference type="ChEBI" id="CHEBI:37563"/>
    </ligand>
</feature>
<sequence>MRLTQMPSEFQKALPVLEKIKEAGFEAYFVGGSVRDALLHSPIHDVDIATSSYPEETKQIFPRTADIGIEHGTVLVLDGDEEYEVTTFRTEDVYVDYRRPSAVSFVRSLEEDLKRRDFTVNAFALDETGEIVDLFHGLEDLEKQVLRAVGVASERFNEDALRIMRGFRFQASLGFALEPETFKAMKTLTPLLEKISVERTFVEFDKLLLAPFWRRGLASMIESQAYDYLPDMASSQDKLNRLFDLETDFTFESSEQAWAALLWALEIENAQSFLKSWKTSRQFAKQVQDLLIILALRENGELSKRDCYRFDIDLLLQAENLRQAQGKEVNPQAITEKYQSLTIHDKKEIQINGGILIKEYGYQPGPDLGEILTEIEFAIVDGELENNREAIHAYLREKK</sequence>
<dbReference type="EC" id="2.7.7.72" evidence="1"/>
<dbReference type="EMBL" id="AE005672">
    <property type="protein sequence ID" value="AAK75641.1"/>
    <property type="status" value="ALT_INIT"/>
    <property type="molecule type" value="Genomic_DNA"/>
</dbReference>
<dbReference type="PIR" id="H95180">
    <property type="entry name" value="H95180"/>
</dbReference>
<dbReference type="RefSeq" id="WP_001808398.1">
    <property type="nucleotide sequence ID" value="NZ_CP155539.1"/>
</dbReference>
<dbReference type="SMR" id="Q97PP9"/>
<dbReference type="PaxDb" id="170187-SP_1554"/>
<dbReference type="EnsemblBacteria" id="AAK75641">
    <property type="protein sequence ID" value="AAK75641"/>
    <property type="gene ID" value="SP_1554"/>
</dbReference>
<dbReference type="KEGG" id="spn:SP_1554"/>
<dbReference type="eggNOG" id="COG0617">
    <property type="taxonomic scope" value="Bacteria"/>
</dbReference>
<dbReference type="PhylomeDB" id="Q97PP9"/>
<dbReference type="BioCyc" id="SPNE170187:G1FZB-1574-MONOMER"/>
<dbReference type="Proteomes" id="UP000000585">
    <property type="component" value="Chromosome"/>
</dbReference>
<dbReference type="GO" id="GO:0005524">
    <property type="term" value="F:ATP binding"/>
    <property type="evidence" value="ECO:0007669"/>
    <property type="project" value="UniProtKB-UniRule"/>
</dbReference>
<dbReference type="GO" id="GO:0004810">
    <property type="term" value="F:CCA tRNA nucleotidyltransferase activity"/>
    <property type="evidence" value="ECO:0007669"/>
    <property type="project" value="UniProtKB-UniRule"/>
</dbReference>
<dbReference type="GO" id="GO:0000287">
    <property type="term" value="F:magnesium ion binding"/>
    <property type="evidence" value="ECO:0007669"/>
    <property type="project" value="UniProtKB-UniRule"/>
</dbReference>
<dbReference type="GO" id="GO:0000049">
    <property type="term" value="F:tRNA binding"/>
    <property type="evidence" value="ECO:0007669"/>
    <property type="project" value="UniProtKB-UniRule"/>
</dbReference>
<dbReference type="GO" id="GO:0042245">
    <property type="term" value="P:RNA repair"/>
    <property type="evidence" value="ECO:0007669"/>
    <property type="project" value="UniProtKB-KW"/>
</dbReference>
<dbReference type="GO" id="GO:0001680">
    <property type="term" value="P:tRNA 3'-terminal CCA addition"/>
    <property type="evidence" value="ECO:0007669"/>
    <property type="project" value="UniProtKB-UniRule"/>
</dbReference>
<dbReference type="CDD" id="cd05398">
    <property type="entry name" value="NT_ClassII-CCAase"/>
    <property type="match status" value="1"/>
</dbReference>
<dbReference type="Gene3D" id="1.10.110.30">
    <property type="match status" value="1"/>
</dbReference>
<dbReference type="Gene3D" id="1.10.246.80">
    <property type="match status" value="1"/>
</dbReference>
<dbReference type="Gene3D" id="1.20.58.560">
    <property type="match status" value="1"/>
</dbReference>
<dbReference type="Gene3D" id="3.30.460.10">
    <property type="entry name" value="Beta Polymerase, domain 2"/>
    <property type="match status" value="1"/>
</dbReference>
<dbReference type="HAMAP" id="MF_01263">
    <property type="entry name" value="CCA_bact_type3"/>
    <property type="match status" value="1"/>
</dbReference>
<dbReference type="InterPro" id="IPR050264">
    <property type="entry name" value="Bact_CCA-adding_enz_type3_sf"/>
</dbReference>
<dbReference type="InterPro" id="IPR032810">
    <property type="entry name" value="CCA-adding_enz_C"/>
</dbReference>
<dbReference type="InterPro" id="IPR023068">
    <property type="entry name" value="CCA-adding_enz_firmicutes"/>
</dbReference>
<dbReference type="InterPro" id="IPR043519">
    <property type="entry name" value="NT_sf"/>
</dbReference>
<dbReference type="InterPro" id="IPR002646">
    <property type="entry name" value="PolA_pol_head_dom"/>
</dbReference>
<dbReference type="InterPro" id="IPR032828">
    <property type="entry name" value="PolyA_RNA-bd"/>
</dbReference>
<dbReference type="NCBIfam" id="NF009814">
    <property type="entry name" value="PRK13299.1"/>
    <property type="match status" value="1"/>
</dbReference>
<dbReference type="PANTHER" id="PTHR46173">
    <property type="entry name" value="CCA TRNA NUCLEOTIDYLTRANSFERASE 1, MITOCHONDRIAL"/>
    <property type="match status" value="1"/>
</dbReference>
<dbReference type="PANTHER" id="PTHR46173:SF1">
    <property type="entry name" value="CCA TRNA NUCLEOTIDYLTRANSFERASE 1, MITOCHONDRIAL"/>
    <property type="match status" value="1"/>
</dbReference>
<dbReference type="Pfam" id="PF01743">
    <property type="entry name" value="PolyA_pol"/>
    <property type="match status" value="1"/>
</dbReference>
<dbReference type="Pfam" id="PF12627">
    <property type="entry name" value="PolyA_pol_RNAbd"/>
    <property type="match status" value="1"/>
</dbReference>
<dbReference type="Pfam" id="PF13735">
    <property type="entry name" value="tRNA_NucTran2_2"/>
    <property type="match status" value="1"/>
</dbReference>
<dbReference type="SUPFAM" id="SSF81301">
    <property type="entry name" value="Nucleotidyltransferase"/>
    <property type="match status" value="1"/>
</dbReference>
<dbReference type="SUPFAM" id="SSF81891">
    <property type="entry name" value="Poly A polymerase C-terminal region-like"/>
    <property type="match status" value="1"/>
</dbReference>
<gene>
    <name evidence="1" type="primary">cca</name>
    <name type="ordered locus">SP_1554</name>
</gene>
<organism>
    <name type="scientific">Streptococcus pneumoniae serotype 4 (strain ATCC BAA-334 / TIGR4)</name>
    <dbReference type="NCBI Taxonomy" id="170187"/>
    <lineage>
        <taxon>Bacteria</taxon>
        <taxon>Bacillati</taxon>
        <taxon>Bacillota</taxon>
        <taxon>Bacilli</taxon>
        <taxon>Lactobacillales</taxon>
        <taxon>Streptococcaceae</taxon>
        <taxon>Streptococcus</taxon>
    </lineage>
</organism>
<proteinExistence type="inferred from homology"/>
<comment type="function">
    <text evidence="1">Catalyzes the addition and repair of the essential 3'-terminal CCA sequence in tRNAs without using a nucleic acid template. Adds these three nucleotides in the order of C, C, and A to the tRNA nucleotide-73, using CTP and ATP as substrates and producing inorganic pyrophosphate. tRNA 3'-terminal CCA addition is required both for tRNA processing and repair. Also involved in tRNA surveillance by mediating tandem CCA addition to generate a CCACCA at the 3' terminus of unstable tRNAs. While stable tRNAs receive only 3'-terminal CCA, unstable tRNAs are marked with CCACCA and rapidly degraded.</text>
</comment>
<comment type="catalytic activity">
    <reaction evidence="1">
        <text>a tRNA precursor + 2 CTP + ATP = a tRNA with a 3' CCA end + 3 diphosphate</text>
        <dbReference type="Rhea" id="RHEA:14433"/>
        <dbReference type="Rhea" id="RHEA-COMP:10465"/>
        <dbReference type="Rhea" id="RHEA-COMP:10468"/>
        <dbReference type="ChEBI" id="CHEBI:30616"/>
        <dbReference type="ChEBI" id="CHEBI:33019"/>
        <dbReference type="ChEBI" id="CHEBI:37563"/>
        <dbReference type="ChEBI" id="CHEBI:74896"/>
        <dbReference type="ChEBI" id="CHEBI:83071"/>
        <dbReference type="EC" id="2.7.7.72"/>
    </reaction>
</comment>
<comment type="catalytic activity">
    <reaction evidence="1">
        <text>a tRNA with a 3' CCA end + 2 CTP + ATP = a tRNA with a 3' CCACCA end + 3 diphosphate</text>
        <dbReference type="Rhea" id="RHEA:76235"/>
        <dbReference type="Rhea" id="RHEA-COMP:10468"/>
        <dbReference type="Rhea" id="RHEA-COMP:18655"/>
        <dbReference type="ChEBI" id="CHEBI:30616"/>
        <dbReference type="ChEBI" id="CHEBI:33019"/>
        <dbReference type="ChEBI" id="CHEBI:37563"/>
        <dbReference type="ChEBI" id="CHEBI:83071"/>
        <dbReference type="ChEBI" id="CHEBI:195187"/>
    </reaction>
    <physiologicalReaction direction="left-to-right" evidence="1">
        <dbReference type="Rhea" id="RHEA:76236"/>
    </physiologicalReaction>
</comment>
<comment type="cofactor">
    <cofactor evidence="1">
        <name>Mg(2+)</name>
        <dbReference type="ChEBI" id="CHEBI:18420"/>
    </cofactor>
</comment>
<comment type="subunit">
    <text evidence="1">Homodimer.</text>
</comment>
<comment type="miscellaneous">
    <text evidence="1">A single active site specifically recognizes both ATP and CTP and is responsible for their addition.</text>
</comment>
<comment type="similarity">
    <text evidence="1">Belongs to the tRNA nucleotidyltransferase/poly(A) polymerase family. Bacterial CCA-adding enzyme type 3 subfamily.</text>
</comment>
<comment type="sequence caution" evidence="2">
    <conflict type="erroneous initiation">
        <sequence resource="EMBL-CDS" id="AAK75641"/>
    </conflict>
</comment>
<keyword id="KW-0067">ATP-binding</keyword>
<keyword id="KW-0460">Magnesium</keyword>
<keyword id="KW-0479">Metal-binding</keyword>
<keyword id="KW-0547">Nucleotide-binding</keyword>
<keyword id="KW-0548">Nucleotidyltransferase</keyword>
<keyword id="KW-1185">Reference proteome</keyword>
<keyword id="KW-0692">RNA repair</keyword>
<keyword id="KW-0694">RNA-binding</keyword>
<keyword id="KW-0808">Transferase</keyword>
<keyword id="KW-0819">tRNA processing</keyword>
<protein>
    <recommendedName>
        <fullName evidence="1">CCA-adding enzyme</fullName>
        <ecNumber evidence="1">2.7.7.72</ecNumber>
    </recommendedName>
    <alternativeName>
        <fullName evidence="1">CCA tRNA nucleotidyltransferase</fullName>
    </alternativeName>
    <alternativeName>
        <fullName evidence="1">tRNA CCA-pyrophosphorylase</fullName>
    </alternativeName>
    <alternativeName>
        <fullName evidence="1">tRNA adenylyl-/cytidylyl- transferase</fullName>
    </alternativeName>
    <alternativeName>
        <fullName evidence="1">tRNA nucleotidyltransferase</fullName>
    </alternativeName>
    <alternativeName>
        <fullName evidence="1">tRNA-NT</fullName>
    </alternativeName>
</protein>
<reference key="1">
    <citation type="journal article" date="2001" name="Science">
        <title>Complete genome sequence of a virulent isolate of Streptococcus pneumoniae.</title>
        <authorList>
            <person name="Tettelin H."/>
            <person name="Nelson K.E."/>
            <person name="Paulsen I.T."/>
            <person name="Eisen J.A."/>
            <person name="Read T.D."/>
            <person name="Peterson S.N."/>
            <person name="Heidelberg J.F."/>
            <person name="DeBoy R.T."/>
            <person name="Haft D.H."/>
            <person name="Dodson R.J."/>
            <person name="Durkin A.S."/>
            <person name="Gwinn M.L."/>
            <person name="Kolonay J.F."/>
            <person name="Nelson W.C."/>
            <person name="Peterson J.D."/>
            <person name="Umayam L.A."/>
            <person name="White O."/>
            <person name="Salzberg S.L."/>
            <person name="Lewis M.R."/>
            <person name="Radune D."/>
            <person name="Holtzapple E.K."/>
            <person name="Khouri H.M."/>
            <person name="Wolf A.M."/>
            <person name="Utterback T.R."/>
            <person name="Hansen C.L."/>
            <person name="McDonald L.A."/>
            <person name="Feldblyum T.V."/>
            <person name="Angiuoli S.V."/>
            <person name="Dickinson T."/>
            <person name="Hickey E.K."/>
            <person name="Holt I.E."/>
            <person name="Loftus B.J."/>
            <person name="Yang F."/>
            <person name="Smith H.O."/>
            <person name="Venter J.C."/>
            <person name="Dougherty B.A."/>
            <person name="Morrison D.A."/>
            <person name="Hollingshead S.K."/>
            <person name="Fraser C.M."/>
        </authorList>
    </citation>
    <scope>NUCLEOTIDE SEQUENCE [LARGE SCALE GENOMIC DNA]</scope>
    <source>
        <strain>ATCC BAA-334 / TIGR4</strain>
    </source>
</reference>
<evidence type="ECO:0000255" key="1">
    <source>
        <dbReference type="HAMAP-Rule" id="MF_01263"/>
    </source>
</evidence>
<evidence type="ECO:0000305" key="2"/>